<organism>
    <name type="scientific">Pectobacterium atrosepticum (strain SCRI 1043 / ATCC BAA-672)</name>
    <name type="common">Erwinia carotovora subsp. atroseptica</name>
    <dbReference type="NCBI Taxonomy" id="218491"/>
    <lineage>
        <taxon>Bacteria</taxon>
        <taxon>Pseudomonadati</taxon>
        <taxon>Pseudomonadota</taxon>
        <taxon>Gammaproteobacteria</taxon>
        <taxon>Enterobacterales</taxon>
        <taxon>Pectobacteriaceae</taxon>
        <taxon>Pectobacterium</taxon>
    </lineage>
</organism>
<evidence type="ECO:0000255" key="1">
    <source>
        <dbReference type="HAMAP-Rule" id="MF_01705"/>
    </source>
</evidence>
<evidence type="ECO:0000255" key="2">
    <source>
        <dbReference type="PROSITE-ProRule" id="PRU01213"/>
    </source>
</evidence>
<reference key="1">
    <citation type="journal article" date="2004" name="Proc. Natl. Acad. Sci. U.S.A.">
        <title>Genome sequence of the enterobacterial phytopathogen Erwinia carotovora subsp. atroseptica and characterization of virulence factors.</title>
        <authorList>
            <person name="Bell K.S."/>
            <person name="Sebaihia M."/>
            <person name="Pritchard L."/>
            <person name="Holden M.T.G."/>
            <person name="Hyman L.J."/>
            <person name="Holeva M.C."/>
            <person name="Thomson N.R."/>
            <person name="Bentley S.D."/>
            <person name="Churcher L.J.C."/>
            <person name="Mungall K."/>
            <person name="Atkin R."/>
            <person name="Bason N."/>
            <person name="Brooks K."/>
            <person name="Chillingworth T."/>
            <person name="Clark K."/>
            <person name="Doggett J."/>
            <person name="Fraser A."/>
            <person name="Hance Z."/>
            <person name="Hauser H."/>
            <person name="Jagels K."/>
            <person name="Moule S."/>
            <person name="Norbertczak H."/>
            <person name="Ormond D."/>
            <person name="Price C."/>
            <person name="Quail M.A."/>
            <person name="Sanders M."/>
            <person name="Walker D."/>
            <person name="Whitehead S."/>
            <person name="Salmond G.P.C."/>
            <person name="Birch P.R.J."/>
            <person name="Parkhill J."/>
            <person name="Toth I.K."/>
        </authorList>
    </citation>
    <scope>NUCLEOTIDE SEQUENCE [LARGE SCALE GENOMIC DNA]</scope>
    <source>
        <strain>SCRI 1043 / ATCC BAA-672</strain>
    </source>
</reference>
<proteinExistence type="inferred from homology"/>
<sequence length="352" mass="39207">MLQLDFHQQLGSLELHVQSELPANGITAIFGVSGAGKTSLINAVVGLTRPDGGRIVLNDHVLVDTQQRVFLPPEKRHIGYVFQDARLFPHYRVRGNLRYGMAEKMASQFDDIVNLLGIEHLLNRYPLTLSGGEKQRVAIGRALLTAPELLLMDEPLASLDLPRKRELLPYLERLAKEVNIPILYVSHSLEEIVRLADHVVVLDKGKVKAQGLLEEVWASSALRPWLPKDEQSSILSVRVLAQHEHYAMTALALDDQQVWVGKVELAQDAVLRIRVNAADVSLVLQPPEKSSIRNVLRASVEECIDVDGQVEVKLAVGQQTLWSRITPWARDDLALHPGQMLYAQIKSVSITA</sequence>
<name>MODC_PECAS</name>
<gene>
    <name evidence="1" type="primary">modC</name>
    <name type="ordered locus">ECA1395</name>
</gene>
<accession>Q6D7D0</accession>
<feature type="chain" id="PRO_0000092540" description="Molybdenum import ATP-binding protein ModC">
    <location>
        <begin position="1"/>
        <end position="352"/>
    </location>
</feature>
<feature type="domain" description="ABC transporter" evidence="1">
    <location>
        <begin position="1"/>
        <end position="229"/>
    </location>
</feature>
<feature type="domain" description="Mop" evidence="2">
    <location>
        <begin position="289"/>
        <end position="352"/>
    </location>
</feature>
<feature type="binding site" evidence="1">
    <location>
        <begin position="31"/>
        <end position="38"/>
    </location>
    <ligand>
        <name>ATP</name>
        <dbReference type="ChEBI" id="CHEBI:30616"/>
    </ligand>
</feature>
<dbReference type="EC" id="7.3.2.5" evidence="1"/>
<dbReference type="EMBL" id="BX950851">
    <property type="protein sequence ID" value="CAG74305.1"/>
    <property type="molecule type" value="Genomic_DNA"/>
</dbReference>
<dbReference type="RefSeq" id="WP_011092980.1">
    <property type="nucleotide sequence ID" value="NC_004547.2"/>
</dbReference>
<dbReference type="SMR" id="Q6D7D0"/>
<dbReference type="STRING" id="218491.ECA1395"/>
<dbReference type="KEGG" id="eca:ECA1395"/>
<dbReference type="eggNOG" id="COG4148">
    <property type="taxonomic scope" value="Bacteria"/>
</dbReference>
<dbReference type="HOGENOM" id="CLU_000604_1_1_6"/>
<dbReference type="OrthoDB" id="9802264at2"/>
<dbReference type="Proteomes" id="UP000007966">
    <property type="component" value="Chromosome"/>
</dbReference>
<dbReference type="GO" id="GO:0005886">
    <property type="term" value="C:plasma membrane"/>
    <property type="evidence" value="ECO:0007669"/>
    <property type="project" value="UniProtKB-SubCell"/>
</dbReference>
<dbReference type="GO" id="GO:0015412">
    <property type="term" value="F:ABC-type molybdate transporter activity"/>
    <property type="evidence" value="ECO:0007669"/>
    <property type="project" value="UniProtKB-EC"/>
</dbReference>
<dbReference type="GO" id="GO:0005524">
    <property type="term" value="F:ATP binding"/>
    <property type="evidence" value="ECO:0007669"/>
    <property type="project" value="UniProtKB-KW"/>
</dbReference>
<dbReference type="GO" id="GO:0016887">
    <property type="term" value="F:ATP hydrolysis activity"/>
    <property type="evidence" value="ECO:0007669"/>
    <property type="project" value="InterPro"/>
</dbReference>
<dbReference type="FunFam" id="3.40.50.300:FF:000634">
    <property type="entry name" value="Molybdenum import ATP-binding protein ModC"/>
    <property type="match status" value="1"/>
</dbReference>
<dbReference type="Gene3D" id="2.40.50.100">
    <property type="match status" value="1"/>
</dbReference>
<dbReference type="Gene3D" id="3.40.50.300">
    <property type="entry name" value="P-loop containing nucleotide triphosphate hydrolases"/>
    <property type="match status" value="1"/>
</dbReference>
<dbReference type="InterPro" id="IPR003593">
    <property type="entry name" value="AAA+_ATPase"/>
</dbReference>
<dbReference type="InterPro" id="IPR003439">
    <property type="entry name" value="ABC_transporter-like_ATP-bd"/>
</dbReference>
<dbReference type="InterPro" id="IPR017871">
    <property type="entry name" value="ABC_transporter-like_CS"/>
</dbReference>
<dbReference type="InterPro" id="IPR008995">
    <property type="entry name" value="Mo/tungstate-bd_C_term_dom"/>
</dbReference>
<dbReference type="InterPro" id="IPR011868">
    <property type="entry name" value="ModC_ABC_ATP-bd"/>
</dbReference>
<dbReference type="InterPro" id="IPR050334">
    <property type="entry name" value="Molybdenum_import_ModC"/>
</dbReference>
<dbReference type="InterPro" id="IPR004606">
    <property type="entry name" value="Mop_domain"/>
</dbReference>
<dbReference type="InterPro" id="IPR027417">
    <property type="entry name" value="P-loop_NTPase"/>
</dbReference>
<dbReference type="InterPro" id="IPR005116">
    <property type="entry name" value="Transp-assoc_OB_typ1"/>
</dbReference>
<dbReference type="NCBIfam" id="TIGR02142">
    <property type="entry name" value="modC_ABC"/>
    <property type="match status" value="1"/>
</dbReference>
<dbReference type="NCBIfam" id="TIGR00638">
    <property type="entry name" value="Mop"/>
    <property type="match status" value="1"/>
</dbReference>
<dbReference type="NCBIfam" id="NF008355">
    <property type="entry name" value="PRK11144.1"/>
    <property type="match status" value="1"/>
</dbReference>
<dbReference type="PANTHER" id="PTHR43514">
    <property type="entry name" value="ABC TRANSPORTER I FAMILY MEMBER 10"/>
    <property type="match status" value="1"/>
</dbReference>
<dbReference type="PANTHER" id="PTHR43514:SF4">
    <property type="entry name" value="ABC TRANSPORTER I FAMILY MEMBER 10"/>
    <property type="match status" value="1"/>
</dbReference>
<dbReference type="Pfam" id="PF00005">
    <property type="entry name" value="ABC_tran"/>
    <property type="match status" value="1"/>
</dbReference>
<dbReference type="Pfam" id="PF03459">
    <property type="entry name" value="TOBE"/>
    <property type="match status" value="1"/>
</dbReference>
<dbReference type="SMART" id="SM00382">
    <property type="entry name" value="AAA"/>
    <property type="match status" value="1"/>
</dbReference>
<dbReference type="SUPFAM" id="SSF50331">
    <property type="entry name" value="MOP-like"/>
    <property type="match status" value="1"/>
</dbReference>
<dbReference type="SUPFAM" id="SSF52540">
    <property type="entry name" value="P-loop containing nucleoside triphosphate hydrolases"/>
    <property type="match status" value="1"/>
</dbReference>
<dbReference type="PROSITE" id="PS00211">
    <property type="entry name" value="ABC_TRANSPORTER_1"/>
    <property type="match status" value="1"/>
</dbReference>
<dbReference type="PROSITE" id="PS50893">
    <property type="entry name" value="ABC_TRANSPORTER_2"/>
    <property type="match status" value="1"/>
</dbReference>
<dbReference type="PROSITE" id="PS51241">
    <property type="entry name" value="MODC"/>
    <property type="match status" value="1"/>
</dbReference>
<dbReference type="PROSITE" id="PS51866">
    <property type="entry name" value="MOP"/>
    <property type="match status" value="1"/>
</dbReference>
<keyword id="KW-0067">ATP-binding</keyword>
<keyword id="KW-0997">Cell inner membrane</keyword>
<keyword id="KW-1003">Cell membrane</keyword>
<keyword id="KW-0472">Membrane</keyword>
<keyword id="KW-0500">Molybdenum</keyword>
<keyword id="KW-0547">Nucleotide-binding</keyword>
<keyword id="KW-1185">Reference proteome</keyword>
<keyword id="KW-1278">Translocase</keyword>
<keyword id="KW-0813">Transport</keyword>
<protein>
    <recommendedName>
        <fullName evidence="1">Molybdenum import ATP-binding protein ModC</fullName>
        <ecNumber evidence="1">7.3.2.5</ecNumber>
    </recommendedName>
</protein>
<comment type="function">
    <text evidence="1">Part of the ABC transporter complex ModABC involved in molybdenum import. Responsible for energy coupling to the transport system.</text>
</comment>
<comment type="catalytic activity">
    <reaction evidence="1">
        <text>molybdate(out) + ATP + H2O = molybdate(in) + ADP + phosphate + H(+)</text>
        <dbReference type="Rhea" id="RHEA:22020"/>
        <dbReference type="ChEBI" id="CHEBI:15377"/>
        <dbReference type="ChEBI" id="CHEBI:15378"/>
        <dbReference type="ChEBI" id="CHEBI:30616"/>
        <dbReference type="ChEBI" id="CHEBI:36264"/>
        <dbReference type="ChEBI" id="CHEBI:43474"/>
        <dbReference type="ChEBI" id="CHEBI:456216"/>
        <dbReference type="EC" id="7.3.2.5"/>
    </reaction>
</comment>
<comment type="subunit">
    <text evidence="1">The complex is composed of two ATP-binding proteins (ModC), two transmembrane proteins (ModB) and a solute-binding protein (ModA).</text>
</comment>
<comment type="subcellular location">
    <subcellularLocation>
        <location evidence="1">Cell inner membrane</location>
        <topology evidence="1">Peripheral membrane protein</topology>
    </subcellularLocation>
</comment>
<comment type="similarity">
    <text evidence="1">Belongs to the ABC transporter superfamily. Molybdate importer (TC 3.A.1.8) family.</text>
</comment>